<proteinExistence type="inferred from homology"/>
<comment type="function">
    <text evidence="1">Modifies, by uridylylation and deuridylylation, the PII regulatory proteins (GlnB and homologs), in response to the nitrogen status of the cell that GlnD senses through the glutamine level. Under low glutamine levels, catalyzes the conversion of the PII proteins and UTP to PII-UMP and PPi, while under higher glutamine levels, GlnD hydrolyzes PII-UMP to PII and UMP (deuridylylation). Thus, controls uridylylation state and activity of the PII proteins, and plays an important role in the regulation of nitrogen assimilation and metabolism.</text>
</comment>
<comment type="catalytic activity">
    <reaction evidence="1">
        <text>[protein-PII]-L-tyrosine + UTP = [protein-PII]-uridylyl-L-tyrosine + diphosphate</text>
        <dbReference type="Rhea" id="RHEA:13673"/>
        <dbReference type="Rhea" id="RHEA-COMP:12147"/>
        <dbReference type="Rhea" id="RHEA-COMP:12148"/>
        <dbReference type="ChEBI" id="CHEBI:33019"/>
        <dbReference type="ChEBI" id="CHEBI:46398"/>
        <dbReference type="ChEBI" id="CHEBI:46858"/>
        <dbReference type="ChEBI" id="CHEBI:90602"/>
        <dbReference type="EC" id="2.7.7.59"/>
    </reaction>
</comment>
<comment type="catalytic activity">
    <reaction evidence="1">
        <text>[protein-PII]-uridylyl-L-tyrosine + H2O = [protein-PII]-L-tyrosine + UMP + H(+)</text>
        <dbReference type="Rhea" id="RHEA:48600"/>
        <dbReference type="Rhea" id="RHEA-COMP:12147"/>
        <dbReference type="Rhea" id="RHEA-COMP:12148"/>
        <dbReference type="ChEBI" id="CHEBI:15377"/>
        <dbReference type="ChEBI" id="CHEBI:15378"/>
        <dbReference type="ChEBI" id="CHEBI:46858"/>
        <dbReference type="ChEBI" id="CHEBI:57865"/>
        <dbReference type="ChEBI" id="CHEBI:90602"/>
    </reaction>
</comment>
<comment type="cofactor">
    <cofactor evidence="1">
        <name>Mg(2+)</name>
        <dbReference type="ChEBI" id="CHEBI:18420"/>
    </cofactor>
</comment>
<comment type="activity regulation">
    <text evidence="1">Uridylyltransferase (UTase) activity is inhibited by glutamine, while glutamine activates uridylyl-removing (UR) activity.</text>
</comment>
<comment type="domain">
    <text evidence="1">Has four distinct domains: an N-terminal nucleotidyltransferase (NT) domain responsible for UTase activity, a central HD domain that encodes UR activity, and two C-terminal ACT domains that seem to have a role in glutamine sensing.</text>
</comment>
<comment type="similarity">
    <text evidence="1">Belongs to the GlnD family.</text>
</comment>
<dbReference type="EC" id="2.7.7.59" evidence="1"/>
<dbReference type="EC" id="3.1.4.-" evidence="1"/>
<dbReference type="EMBL" id="CP000034">
    <property type="protein sequence ID" value="ABB60415.1"/>
    <property type="molecule type" value="Genomic_DNA"/>
</dbReference>
<dbReference type="RefSeq" id="WP_001094577.1">
    <property type="nucleotide sequence ID" value="NC_007606.1"/>
</dbReference>
<dbReference type="RefSeq" id="YP_401904.1">
    <property type="nucleotide sequence ID" value="NC_007606.1"/>
</dbReference>
<dbReference type="SMR" id="Q32JU2"/>
<dbReference type="STRING" id="300267.SDY_0183"/>
<dbReference type="EnsemblBacteria" id="ABB60415">
    <property type="protein sequence ID" value="ABB60415"/>
    <property type="gene ID" value="SDY_0183"/>
</dbReference>
<dbReference type="KEGG" id="sdy:SDY_0183"/>
<dbReference type="PATRIC" id="fig|300267.13.peg.212"/>
<dbReference type="HOGENOM" id="CLU_012833_0_0_6"/>
<dbReference type="Proteomes" id="UP000002716">
    <property type="component" value="Chromosome"/>
</dbReference>
<dbReference type="GO" id="GO:0008773">
    <property type="term" value="F:[protein-PII] uridylyltransferase activity"/>
    <property type="evidence" value="ECO:0007669"/>
    <property type="project" value="UniProtKB-UniRule"/>
</dbReference>
<dbReference type="GO" id="GO:0008081">
    <property type="term" value="F:phosphoric diester hydrolase activity"/>
    <property type="evidence" value="ECO:0007669"/>
    <property type="project" value="UniProtKB-UniRule"/>
</dbReference>
<dbReference type="GO" id="GO:0006808">
    <property type="term" value="P:regulation of nitrogen utilization"/>
    <property type="evidence" value="ECO:0007669"/>
    <property type="project" value="UniProtKB-UniRule"/>
</dbReference>
<dbReference type="CDD" id="cd04899">
    <property type="entry name" value="ACT_ACR-UUR-like_2"/>
    <property type="match status" value="1"/>
</dbReference>
<dbReference type="CDD" id="cd04900">
    <property type="entry name" value="ACT_UUR-like_1"/>
    <property type="match status" value="1"/>
</dbReference>
<dbReference type="CDD" id="cd00077">
    <property type="entry name" value="HDc"/>
    <property type="match status" value="1"/>
</dbReference>
<dbReference type="CDD" id="cd05401">
    <property type="entry name" value="NT_GlnE_GlnD_like"/>
    <property type="match status" value="1"/>
</dbReference>
<dbReference type="FunFam" id="1.10.3210.10:FF:000005">
    <property type="entry name" value="Bifunctional uridylyltransferase/uridylyl-removing enzyme"/>
    <property type="match status" value="1"/>
</dbReference>
<dbReference type="Gene3D" id="1.10.3210.10">
    <property type="entry name" value="Hypothetical protein af1432"/>
    <property type="match status" value="1"/>
</dbReference>
<dbReference type="HAMAP" id="MF_00277">
    <property type="entry name" value="PII_uridylyl_transf"/>
    <property type="match status" value="1"/>
</dbReference>
<dbReference type="InterPro" id="IPR045865">
    <property type="entry name" value="ACT-like_dom_sf"/>
</dbReference>
<dbReference type="InterPro" id="IPR002912">
    <property type="entry name" value="ACT_dom"/>
</dbReference>
<dbReference type="InterPro" id="IPR003607">
    <property type="entry name" value="HD/PDEase_dom"/>
</dbReference>
<dbReference type="InterPro" id="IPR006674">
    <property type="entry name" value="HD_domain"/>
</dbReference>
<dbReference type="InterPro" id="IPR043519">
    <property type="entry name" value="NT_sf"/>
</dbReference>
<dbReference type="InterPro" id="IPR013546">
    <property type="entry name" value="PII_UdlTrfase/GS_AdlTrfase"/>
</dbReference>
<dbReference type="InterPro" id="IPR002934">
    <property type="entry name" value="Polymerase_NTP_transf_dom"/>
</dbReference>
<dbReference type="InterPro" id="IPR010043">
    <property type="entry name" value="UTase/UR"/>
</dbReference>
<dbReference type="NCBIfam" id="NF002487">
    <property type="entry name" value="PRK01759.1"/>
    <property type="match status" value="1"/>
</dbReference>
<dbReference type="NCBIfam" id="NF003448">
    <property type="entry name" value="PRK05007.1"/>
    <property type="match status" value="1"/>
</dbReference>
<dbReference type="NCBIfam" id="TIGR01693">
    <property type="entry name" value="UTase_glnD"/>
    <property type="match status" value="1"/>
</dbReference>
<dbReference type="PANTHER" id="PTHR47320">
    <property type="entry name" value="BIFUNCTIONAL URIDYLYLTRANSFERASE/URIDYLYL-REMOVING ENZYME"/>
    <property type="match status" value="1"/>
</dbReference>
<dbReference type="PANTHER" id="PTHR47320:SF1">
    <property type="entry name" value="BIFUNCTIONAL URIDYLYLTRANSFERASE_URIDYLYL-REMOVING ENZYME"/>
    <property type="match status" value="1"/>
</dbReference>
<dbReference type="Pfam" id="PF01842">
    <property type="entry name" value="ACT"/>
    <property type="match status" value="2"/>
</dbReference>
<dbReference type="Pfam" id="PF08335">
    <property type="entry name" value="GlnD_UR_UTase"/>
    <property type="match status" value="1"/>
</dbReference>
<dbReference type="Pfam" id="PF01966">
    <property type="entry name" value="HD"/>
    <property type="match status" value="1"/>
</dbReference>
<dbReference type="Pfam" id="PF01909">
    <property type="entry name" value="NTP_transf_2"/>
    <property type="match status" value="1"/>
</dbReference>
<dbReference type="PIRSF" id="PIRSF006288">
    <property type="entry name" value="PII_uridyltransf"/>
    <property type="match status" value="1"/>
</dbReference>
<dbReference type="SMART" id="SM00471">
    <property type="entry name" value="HDc"/>
    <property type="match status" value="1"/>
</dbReference>
<dbReference type="SUPFAM" id="SSF55021">
    <property type="entry name" value="ACT-like"/>
    <property type="match status" value="2"/>
</dbReference>
<dbReference type="SUPFAM" id="SSF109604">
    <property type="entry name" value="HD-domain/PDEase-like"/>
    <property type="match status" value="1"/>
</dbReference>
<dbReference type="SUPFAM" id="SSF81301">
    <property type="entry name" value="Nucleotidyltransferase"/>
    <property type="match status" value="1"/>
</dbReference>
<dbReference type="SUPFAM" id="SSF81593">
    <property type="entry name" value="Nucleotidyltransferase substrate binding subunit/domain"/>
    <property type="match status" value="1"/>
</dbReference>
<dbReference type="PROSITE" id="PS51671">
    <property type="entry name" value="ACT"/>
    <property type="match status" value="2"/>
</dbReference>
<dbReference type="PROSITE" id="PS51831">
    <property type="entry name" value="HD"/>
    <property type="match status" value="1"/>
</dbReference>
<name>GLND_SHIDS</name>
<feature type="chain" id="PRO_0000231693" description="Bifunctional uridylyltransferase/uridylyl-removing enzyme">
    <location>
        <begin position="1"/>
        <end position="890"/>
    </location>
</feature>
<feature type="domain" description="HD" evidence="2">
    <location>
        <begin position="468"/>
        <end position="590"/>
    </location>
</feature>
<feature type="domain" description="ACT 1" evidence="1">
    <location>
        <begin position="709"/>
        <end position="789"/>
    </location>
</feature>
<feature type="domain" description="ACT 2" evidence="1">
    <location>
        <begin position="816"/>
        <end position="890"/>
    </location>
</feature>
<feature type="region of interest" description="Uridylyltransferase">
    <location>
        <begin position="1"/>
        <end position="349"/>
    </location>
</feature>
<feature type="region of interest" description="Uridylyl-removing">
    <location>
        <begin position="350"/>
        <end position="708"/>
    </location>
</feature>
<reference key="1">
    <citation type="journal article" date="2005" name="Nucleic Acids Res.">
        <title>Genome dynamics and diversity of Shigella species, the etiologic agents of bacillary dysentery.</title>
        <authorList>
            <person name="Yang F."/>
            <person name="Yang J."/>
            <person name="Zhang X."/>
            <person name="Chen L."/>
            <person name="Jiang Y."/>
            <person name="Yan Y."/>
            <person name="Tang X."/>
            <person name="Wang J."/>
            <person name="Xiong Z."/>
            <person name="Dong J."/>
            <person name="Xue Y."/>
            <person name="Zhu Y."/>
            <person name="Xu X."/>
            <person name="Sun L."/>
            <person name="Chen S."/>
            <person name="Nie H."/>
            <person name="Peng J."/>
            <person name="Xu J."/>
            <person name="Wang Y."/>
            <person name="Yuan Z."/>
            <person name="Wen Y."/>
            <person name="Yao Z."/>
            <person name="Shen Y."/>
            <person name="Qiang B."/>
            <person name="Hou Y."/>
            <person name="Yu J."/>
            <person name="Jin Q."/>
        </authorList>
    </citation>
    <scope>NUCLEOTIDE SEQUENCE [LARGE SCALE GENOMIC DNA]</scope>
    <source>
        <strain>Sd197</strain>
    </source>
</reference>
<sequence>MNTLPEQYANTALPTLPGQPQNPCVWPRDELTVGGIKAHIDTFQRWLGDAFDNGISAEQLIEARTEFIDQLLQRLWIEAGFSQIADLALVAVGGYGRGELHPLSDIDLLILSRKKLPDDQAQKVGELLTLLWDVKLEVGHSVRTLEECMLEGLSDLTVATNLIESRLLIGDVALFLELQKHIFSEGFWPSDKFYAAKVEEQNQRHQRYHGTSYNLEPDIKSSPGGLRDIHTLQWVARRHFGATSLDEMVGFGFLTSAERAELNECLHILWRIRFALHLVVSRYDNRLLFDRQLSVAQRLNYSGEGNEPVERMMKDYFRVTRRVSELNQMLLQLFDEAILALPADEKPRPIDDEFQLRGTLIDLRDETLFMRQPEAILRMFYTMVRNSAITGIYSTTLRQLRHARRHLQQPLCNIPQARKLFLSILRHPGAVRRGLLPMHRHSVLGAYMPQWSHIVGQMQFDLFHAYTVDEHTIRVMLKLESFASEETRQRHPLCVDVWPRLPSPELIFIAALFHDIAKGRGGDHSILGAQDVVHFAELHGLNSRETQLVAWLVRQHLLMSVTAQRRDIQDPEVIKQFAEEVQTENRLRYLVCLTVADICATNETLWNSWKQSLLRELYFATEKQLRRGMQNTPDMRERVRHHQLQALALLRMDNIDEEALHQIWSRCRANYFVRHSPNQLAWHARHLLQHDLSKPLVLLSPQATRGGTEIFIWSPDRPYLFAAVCAELDRRNLSVHDAQIFTTRDGMAMDTFIVLEPDGSPLSADRHEVIRFGLEQVLTQSSWQPPQPRRQPAKLRHFTVETEVTFLPTHTDRKSFLDLIALDQPGLLARVGKIFADLGISLHGARITTIGERVEDLFIIATADRRALNNELQQEVHQRLTEALNPNDKG</sequence>
<protein>
    <recommendedName>
        <fullName evidence="1">Bifunctional uridylyltransferase/uridylyl-removing enzyme</fullName>
        <shortName evidence="1">UTase/UR</shortName>
    </recommendedName>
    <alternativeName>
        <fullName evidence="1">Bifunctional [protein-PII] modification enzyme</fullName>
    </alternativeName>
    <alternativeName>
        <fullName evidence="1">Bifunctional nitrogen sensor protein</fullName>
    </alternativeName>
    <domain>
        <recommendedName>
            <fullName evidence="1">[Protein-PII] uridylyltransferase</fullName>
            <shortName evidence="1">PII uridylyltransferase</shortName>
            <shortName evidence="1">UTase</shortName>
            <ecNumber evidence="1">2.7.7.59</ecNumber>
        </recommendedName>
    </domain>
    <domain>
        <recommendedName>
            <fullName evidence="1">[Protein-PII]-UMP uridylyl-removing enzyme</fullName>
            <shortName evidence="1">UR</shortName>
            <ecNumber evidence="1">3.1.4.-</ecNumber>
        </recommendedName>
    </domain>
</protein>
<organism>
    <name type="scientific">Shigella dysenteriae serotype 1 (strain Sd197)</name>
    <dbReference type="NCBI Taxonomy" id="300267"/>
    <lineage>
        <taxon>Bacteria</taxon>
        <taxon>Pseudomonadati</taxon>
        <taxon>Pseudomonadota</taxon>
        <taxon>Gammaproteobacteria</taxon>
        <taxon>Enterobacterales</taxon>
        <taxon>Enterobacteriaceae</taxon>
        <taxon>Shigella</taxon>
    </lineage>
</organism>
<evidence type="ECO:0000255" key="1">
    <source>
        <dbReference type="HAMAP-Rule" id="MF_00277"/>
    </source>
</evidence>
<evidence type="ECO:0000255" key="2">
    <source>
        <dbReference type="PROSITE-ProRule" id="PRU01175"/>
    </source>
</evidence>
<gene>
    <name evidence="1" type="primary">glnD</name>
    <name type="ordered locus">SDY_0183</name>
</gene>
<keyword id="KW-0378">Hydrolase</keyword>
<keyword id="KW-0460">Magnesium</keyword>
<keyword id="KW-0511">Multifunctional enzyme</keyword>
<keyword id="KW-0548">Nucleotidyltransferase</keyword>
<keyword id="KW-1185">Reference proteome</keyword>
<keyword id="KW-0677">Repeat</keyword>
<keyword id="KW-0808">Transferase</keyword>
<accession>Q32JU2</accession>